<name>PATR_THEFY</name>
<proteinExistence type="inferred from homology"/>
<gene>
    <name evidence="1" type="primary">pat</name>
    <name type="ordered locus">Tfu_3018</name>
</gene>
<protein>
    <recommendedName>
        <fullName evidence="1">Aromatic amino acid aminotransferase</fullName>
        <shortName evidence="1">ArAT</shortName>
        <ecNumber evidence="1">2.6.1.57</ecNumber>
    </recommendedName>
</protein>
<comment type="function">
    <text evidence="1">Aminotransferase that catalyzes the conversion of aromatic amino acids and 2-oxoglutarate into corresponding aromatic oxo acids and L-glutamate.</text>
</comment>
<comment type="catalytic activity">
    <reaction evidence="1">
        <text>an aromatic L-alpha-amino acid + 2-oxoglutarate = an aromatic oxo-acid + L-glutamate</text>
        <dbReference type="Rhea" id="RHEA:17533"/>
        <dbReference type="ChEBI" id="CHEBI:16810"/>
        <dbReference type="ChEBI" id="CHEBI:29985"/>
        <dbReference type="ChEBI" id="CHEBI:73309"/>
        <dbReference type="ChEBI" id="CHEBI:84824"/>
        <dbReference type="EC" id="2.6.1.57"/>
    </reaction>
</comment>
<comment type="cofactor">
    <cofactor evidence="1">
        <name>pyridoxal 5'-phosphate</name>
        <dbReference type="ChEBI" id="CHEBI:597326"/>
    </cofactor>
</comment>
<comment type="subunit">
    <text evidence="1">Homodimer.</text>
</comment>
<comment type="similarity">
    <text evidence="1">Belongs to the class-II pyridoxal-phosphate-dependent aminotransferase family.</text>
</comment>
<feature type="chain" id="PRO_0000153522" description="Aromatic amino acid aminotransferase">
    <location>
        <begin position="1"/>
        <end position="359"/>
    </location>
</feature>
<feature type="region of interest" description="Disordered" evidence="2">
    <location>
        <begin position="1"/>
        <end position="42"/>
    </location>
</feature>
<feature type="modified residue" description="N6-(pyridoxal phosphate)lysine" evidence="1">
    <location>
        <position position="223"/>
    </location>
</feature>
<evidence type="ECO:0000255" key="1">
    <source>
        <dbReference type="HAMAP-Rule" id="MF_01513"/>
    </source>
</evidence>
<evidence type="ECO:0000256" key="2">
    <source>
        <dbReference type="SAM" id="MobiDB-lite"/>
    </source>
</evidence>
<dbReference type="EC" id="2.6.1.57" evidence="1"/>
<dbReference type="EMBL" id="CP000088">
    <property type="protein sequence ID" value="AAZ57051.1"/>
    <property type="molecule type" value="Genomic_DNA"/>
</dbReference>
<dbReference type="SMR" id="Q47KH1"/>
<dbReference type="STRING" id="269800.Tfu_3018"/>
<dbReference type="KEGG" id="tfu:Tfu_3018"/>
<dbReference type="eggNOG" id="COG0079">
    <property type="taxonomic scope" value="Bacteria"/>
</dbReference>
<dbReference type="HOGENOM" id="CLU_017584_3_3_11"/>
<dbReference type="GO" id="GO:0008793">
    <property type="term" value="F:aromatic-amino-acid transaminase activity"/>
    <property type="evidence" value="ECO:0007669"/>
    <property type="project" value="UniProtKB-UniRule"/>
</dbReference>
<dbReference type="GO" id="GO:0004400">
    <property type="term" value="F:histidinol-phosphate transaminase activity"/>
    <property type="evidence" value="ECO:0007669"/>
    <property type="project" value="InterPro"/>
</dbReference>
<dbReference type="GO" id="GO:0030170">
    <property type="term" value="F:pyridoxal phosphate binding"/>
    <property type="evidence" value="ECO:0007669"/>
    <property type="project" value="UniProtKB-UniRule"/>
</dbReference>
<dbReference type="GO" id="GO:0000105">
    <property type="term" value="P:L-histidine biosynthetic process"/>
    <property type="evidence" value="ECO:0007669"/>
    <property type="project" value="InterPro"/>
</dbReference>
<dbReference type="CDD" id="cd00609">
    <property type="entry name" value="AAT_like"/>
    <property type="match status" value="1"/>
</dbReference>
<dbReference type="Gene3D" id="3.90.1150.10">
    <property type="entry name" value="Aspartate Aminotransferase, domain 1"/>
    <property type="match status" value="1"/>
</dbReference>
<dbReference type="Gene3D" id="3.40.640.10">
    <property type="entry name" value="Type I PLP-dependent aspartate aminotransferase-like (Major domain)"/>
    <property type="match status" value="1"/>
</dbReference>
<dbReference type="HAMAP" id="MF_01023">
    <property type="entry name" value="HisC_aminotrans_2"/>
    <property type="match status" value="1"/>
</dbReference>
<dbReference type="HAMAP" id="MF_01513">
    <property type="entry name" value="Phe_aminotrans_2"/>
    <property type="match status" value="1"/>
</dbReference>
<dbReference type="InterPro" id="IPR001917">
    <property type="entry name" value="Aminotrans_II_pyridoxalP_BS"/>
</dbReference>
<dbReference type="InterPro" id="IPR004839">
    <property type="entry name" value="Aminotransferase_I/II_large"/>
</dbReference>
<dbReference type="InterPro" id="IPR024892">
    <property type="entry name" value="ArAT"/>
</dbReference>
<dbReference type="InterPro" id="IPR005861">
    <property type="entry name" value="HisP_aminotrans"/>
</dbReference>
<dbReference type="InterPro" id="IPR050106">
    <property type="entry name" value="HistidinolP_aminotransfase"/>
</dbReference>
<dbReference type="InterPro" id="IPR015424">
    <property type="entry name" value="PyrdxlP-dep_Trfase"/>
</dbReference>
<dbReference type="InterPro" id="IPR015421">
    <property type="entry name" value="PyrdxlP-dep_Trfase_major"/>
</dbReference>
<dbReference type="InterPro" id="IPR015422">
    <property type="entry name" value="PyrdxlP-dep_Trfase_small"/>
</dbReference>
<dbReference type="NCBIfam" id="TIGR01141">
    <property type="entry name" value="hisC"/>
    <property type="match status" value="1"/>
</dbReference>
<dbReference type="NCBIfam" id="NF002878">
    <property type="entry name" value="PRK03321.1"/>
    <property type="match status" value="1"/>
</dbReference>
<dbReference type="PANTHER" id="PTHR43643:SF3">
    <property type="entry name" value="HISTIDINOL-PHOSPHATE AMINOTRANSFERASE"/>
    <property type="match status" value="1"/>
</dbReference>
<dbReference type="PANTHER" id="PTHR43643">
    <property type="entry name" value="HISTIDINOL-PHOSPHATE AMINOTRANSFERASE 2"/>
    <property type="match status" value="1"/>
</dbReference>
<dbReference type="Pfam" id="PF00155">
    <property type="entry name" value="Aminotran_1_2"/>
    <property type="match status" value="1"/>
</dbReference>
<dbReference type="SUPFAM" id="SSF53383">
    <property type="entry name" value="PLP-dependent transferases"/>
    <property type="match status" value="1"/>
</dbReference>
<dbReference type="PROSITE" id="PS00599">
    <property type="entry name" value="AA_TRANSFER_CLASS_2"/>
    <property type="match status" value="1"/>
</dbReference>
<accession>Q47KH1</accession>
<organism>
    <name type="scientific">Thermobifida fusca (strain YX)</name>
    <dbReference type="NCBI Taxonomy" id="269800"/>
    <lineage>
        <taxon>Bacteria</taxon>
        <taxon>Bacillati</taxon>
        <taxon>Actinomycetota</taxon>
        <taxon>Actinomycetes</taxon>
        <taxon>Streptosporangiales</taxon>
        <taxon>Nocardiopsidaceae</taxon>
        <taxon>Thermobifida</taxon>
    </lineage>
</organism>
<sequence length="359" mass="38920">MSERKPPYLRSALDSIPPYRPGRKVVGPDGRSAKLSSNESPFGPLPSVRQAIADAAADLNRYPDPAAAELTAALARRFHVPEEHVALGAGSVGLLQQLLEATAEPGAEVVYAWRSFEAYPLLTGLAGATPIHVPLREETHDLEALAAAVTDRTRMVFVCNPNNPTGTAVRETELAEFLDTVPEHVLVVLDEAYREYVQDPRVPDGVQLYRDRPNVAVLRTFSKAYGLAALRVGFLIGHPQVVDAVRKTLVPFAVNHLAQAAAVASLAAEQELLERVAVTVKERERVRAALLADGWTVPETEANFVWLRLGEDTLDFAAACEQAGIAVRPFAGEGVRVSIGLPDDNDAFLTVARTYPKRN</sequence>
<reference key="1">
    <citation type="journal article" date="2007" name="J. Bacteriol.">
        <title>Genome sequence and analysis of the soil cellulolytic actinomycete Thermobifida fusca YX.</title>
        <authorList>
            <person name="Lykidis A."/>
            <person name="Mavromatis K."/>
            <person name="Ivanova N."/>
            <person name="Anderson I."/>
            <person name="Land M."/>
            <person name="DiBartolo G."/>
            <person name="Martinez M."/>
            <person name="Lapidus A."/>
            <person name="Lucas S."/>
            <person name="Copeland A."/>
            <person name="Richardson P."/>
            <person name="Wilson D.B."/>
            <person name="Kyrpides N."/>
        </authorList>
    </citation>
    <scope>NUCLEOTIDE SEQUENCE [LARGE SCALE GENOMIC DNA]</scope>
    <source>
        <strain>YX</strain>
    </source>
</reference>
<keyword id="KW-0032">Aminotransferase</keyword>
<keyword id="KW-0663">Pyridoxal phosphate</keyword>
<keyword id="KW-0808">Transferase</keyword>